<geneLocation type="mitochondrion"/>
<organism>
    <name type="scientific">Microcebus murinus</name>
    <name type="common">Gray mouse lemur</name>
    <name type="synonym">Lemur murinus</name>
    <dbReference type="NCBI Taxonomy" id="30608"/>
    <lineage>
        <taxon>Eukaryota</taxon>
        <taxon>Metazoa</taxon>
        <taxon>Chordata</taxon>
        <taxon>Craniata</taxon>
        <taxon>Vertebrata</taxon>
        <taxon>Euteleostomi</taxon>
        <taxon>Mammalia</taxon>
        <taxon>Eutheria</taxon>
        <taxon>Euarchontoglires</taxon>
        <taxon>Primates</taxon>
        <taxon>Strepsirrhini</taxon>
        <taxon>Lemuriformes</taxon>
        <taxon>Cheirogaleidae</taxon>
        <taxon>Microcebus</taxon>
    </lineage>
</organism>
<sequence length="379" mass="42819">MTNIRKTHPLMKIMNNSFIDLPAPSNISSWWNFGSLLGACLVIQIITGLFLAMHYTADTTTAFSSVTHICRDVNQGWIIRYLHANGASMFFLCLFLHVGRGMYYGSFTLTETWNIGIILLFTVMATAFMGYVLPWGQMSFWGATVITNLLSAIPYMGTDLVEWIWGGFSVDKATLTRFFAFHFILPFVILALVMVHLLFLHETGSNNPLGIPSESDKIPFHPYYTIKDLLGLMFLLITLMILVLFSPDLLGDPDNYMPANPLSTPPHIKPEWYFLFAYAILRSIPNKLGGVLALVMSILILAIIPMLQTAKQRSMTFRPLSQIMFWILTADLLILTWIGGQPVEHPFVTIGQVASILYFSLILIIMPTVSLFENKMLKW</sequence>
<dbReference type="EMBL" id="U53572">
    <property type="protein sequence ID" value="AAC50529.1"/>
    <property type="molecule type" value="Genomic_DNA"/>
</dbReference>
<dbReference type="EMBL" id="AF285557">
    <property type="protein sequence ID" value="AAG30702.1"/>
    <property type="molecule type" value="Genomic_DNA"/>
</dbReference>
<dbReference type="EMBL" id="AF285558">
    <property type="protein sequence ID" value="AAG30703.1"/>
    <property type="molecule type" value="Genomic_DNA"/>
</dbReference>
<dbReference type="EMBL" id="AF285559">
    <property type="protein sequence ID" value="AAG30704.1"/>
    <property type="molecule type" value="Genomic_DNA"/>
</dbReference>
<dbReference type="EMBL" id="AF285560">
    <property type="protein sequence ID" value="AAG30705.1"/>
    <property type="molecule type" value="Genomic_DNA"/>
</dbReference>
<dbReference type="EMBL" id="AF285561">
    <property type="protein sequence ID" value="AAG30706.1"/>
    <property type="molecule type" value="Genomic_DNA"/>
</dbReference>
<dbReference type="EMBL" id="AF285562">
    <property type="protein sequence ID" value="AAG30707.1"/>
    <property type="molecule type" value="Genomic_DNA"/>
</dbReference>
<dbReference type="EMBL" id="AF285563">
    <property type="protein sequence ID" value="AAG30708.1"/>
    <property type="molecule type" value="Genomic_DNA"/>
</dbReference>
<dbReference type="EMBL" id="AF285564">
    <property type="protein sequence ID" value="AAG30709.1"/>
    <property type="molecule type" value="Genomic_DNA"/>
</dbReference>
<dbReference type="EMBL" id="AF285565">
    <property type="protein sequence ID" value="AAG30710.1"/>
    <property type="molecule type" value="Genomic_DNA"/>
</dbReference>
<dbReference type="EMBL" id="AF285566">
    <property type="protein sequence ID" value="AAG30711.1"/>
    <property type="molecule type" value="Genomic_DNA"/>
</dbReference>
<dbReference type="EMBL" id="AY167071">
    <property type="protein sequence ID" value="AAN86562.1"/>
    <property type="molecule type" value="Genomic_DNA"/>
</dbReference>
<dbReference type="RefSeq" id="YP_009192261.1">
    <property type="nucleotide sequence ID" value="NC_028718.1"/>
</dbReference>
<dbReference type="SMR" id="Q9G0S9"/>
<dbReference type="Ensembl" id="ENSMICT00000053028.1">
    <property type="protein sequence ID" value="ENSMICP00000022746.1"/>
    <property type="gene ID" value="ENSMICG00000037851.1"/>
</dbReference>
<dbReference type="GeneID" id="26823990"/>
<dbReference type="KEGG" id="mmur:26823990"/>
<dbReference type="CTD" id="4519"/>
<dbReference type="GeneTree" id="ENSGT00390000017948"/>
<dbReference type="OrthoDB" id="244at2759"/>
<dbReference type="Proteomes" id="UP000694394">
    <property type="component" value="Unassembled WGS sequence"/>
</dbReference>
<dbReference type="Bgee" id="ENSMICG00000037851">
    <property type="expression patterns" value="Expressed in adult mammalian kidney and 8 other cell types or tissues"/>
</dbReference>
<dbReference type="GO" id="GO:0005743">
    <property type="term" value="C:mitochondrial inner membrane"/>
    <property type="evidence" value="ECO:0007669"/>
    <property type="project" value="UniProtKB-SubCell"/>
</dbReference>
<dbReference type="GO" id="GO:0045275">
    <property type="term" value="C:respiratory chain complex III"/>
    <property type="evidence" value="ECO:0007669"/>
    <property type="project" value="Ensembl"/>
</dbReference>
<dbReference type="GO" id="GO:0046872">
    <property type="term" value="F:metal ion binding"/>
    <property type="evidence" value="ECO:0007669"/>
    <property type="project" value="UniProtKB-KW"/>
</dbReference>
<dbReference type="GO" id="GO:0008121">
    <property type="term" value="F:ubiquinol-cytochrome-c reductase activity"/>
    <property type="evidence" value="ECO:0007669"/>
    <property type="project" value="InterPro"/>
</dbReference>
<dbReference type="GO" id="GO:0006122">
    <property type="term" value="P:mitochondrial electron transport, ubiquinol to cytochrome c"/>
    <property type="evidence" value="ECO:0007669"/>
    <property type="project" value="TreeGrafter"/>
</dbReference>
<dbReference type="CDD" id="cd00290">
    <property type="entry name" value="cytochrome_b_C"/>
    <property type="match status" value="1"/>
</dbReference>
<dbReference type="CDD" id="cd00284">
    <property type="entry name" value="Cytochrome_b_N"/>
    <property type="match status" value="1"/>
</dbReference>
<dbReference type="FunFam" id="1.20.810.10:FF:000002">
    <property type="entry name" value="Cytochrome b"/>
    <property type="match status" value="1"/>
</dbReference>
<dbReference type="Gene3D" id="1.20.810.10">
    <property type="entry name" value="Cytochrome Bc1 Complex, Chain C"/>
    <property type="match status" value="1"/>
</dbReference>
<dbReference type="InterPro" id="IPR005798">
    <property type="entry name" value="Cyt_b/b6_C"/>
</dbReference>
<dbReference type="InterPro" id="IPR036150">
    <property type="entry name" value="Cyt_b/b6_C_sf"/>
</dbReference>
<dbReference type="InterPro" id="IPR005797">
    <property type="entry name" value="Cyt_b/b6_N"/>
</dbReference>
<dbReference type="InterPro" id="IPR027387">
    <property type="entry name" value="Cytb/b6-like_sf"/>
</dbReference>
<dbReference type="InterPro" id="IPR030689">
    <property type="entry name" value="Cytochrome_b"/>
</dbReference>
<dbReference type="InterPro" id="IPR048260">
    <property type="entry name" value="Cytochrome_b_C_euk/bac"/>
</dbReference>
<dbReference type="InterPro" id="IPR048259">
    <property type="entry name" value="Cytochrome_b_N_euk/bac"/>
</dbReference>
<dbReference type="InterPro" id="IPR016174">
    <property type="entry name" value="Di-haem_cyt_TM"/>
</dbReference>
<dbReference type="PANTHER" id="PTHR19271">
    <property type="entry name" value="CYTOCHROME B"/>
    <property type="match status" value="1"/>
</dbReference>
<dbReference type="PANTHER" id="PTHR19271:SF16">
    <property type="entry name" value="CYTOCHROME B"/>
    <property type="match status" value="1"/>
</dbReference>
<dbReference type="Pfam" id="PF00032">
    <property type="entry name" value="Cytochrom_B_C"/>
    <property type="match status" value="1"/>
</dbReference>
<dbReference type="Pfam" id="PF00033">
    <property type="entry name" value="Cytochrome_B"/>
    <property type="match status" value="1"/>
</dbReference>
<dbReference type="PIRSF" id="PIRSF038885">
    <property type="entry name" value="COB"/>
    <property type="match status" value="1"/>
</dbReference>
<dbReference type="SUPFAM" id="SSF81648">
    <property type="entry name" value="a domain/subunit of cytochrome bc1 complex (Ubiquinol-cytochrome c reductase)"/>
    <property type="match status" value="1"/>
</dbReference>
<dbReference type="SUPFAM" id="SSF81342">
    <property type="entry name" value="Transmembrane di-heme cytochromes"/>
    <property type="match status" value="1"/>
</dbReference>
<dbReference type="PROSITE" id="PS51003">
    <property type="entry name" value="CYTB_CTER"/>
    <property type="match status" value="1"/>
</dbReference>
<dbReference type="PROSITE" id="PS51002">
    <property type="entry name" value="CYTB_NTER"/>
    <property type="match status" value="1"/>
</dbReference>
<gene>
    <name type="primary">MT-CYB</name>
    <name type="synonym">COB</name>
    <name type="synonym">CYTB</name>
    <name type="synonym">MTCYB</name>
</gene>
<comment type="function">
    <text evidence="2">Component of the ubiquinol-cytochrome c reductase complex (complex III or cytochrome b-c1 complex) that is part of the mitochondrial respiratory chain. The b-c1 complex mediates electron transfer from ubiquinol to cytochrome c. Contributes to the generation of a proton gradient across the mitochondrial membrane that is then used for ATP synthesis.</text>
</comment>
<comment type="cofactor">
    <cofactor evidence="2">
        <name>heme b</name>
        <dbReference type="ChEBI" id="CHEBI:60344"/>
    </cofactor>
    <text evidence="2">Binds 2 heme b groups non-covalently.</text>
</comment>
<comment type="subunit">
    <text evidence="2">The cytochrome bc1 complex contains 11 subunits: 3 respiratory subunits (MT-CYB, CYC1 and UQCRFS1), 2 core proteins (UQCRC1 and UQCRC2) and 6 low-molecular weight proteins (UQCRH/QCR6, UQCRB/QCR7, UQCRQ/QCR8, UQCR10/QCR9, UQCR11/QCR10 and a cleavage product of UQCRFS1). This cytochrome bc1 complex then forms a dimer.</text>
</comment>
<comment type="subcellular location">
    <subcellularLocation>
        <location evidence="2">Mitochondrion inner membrane</location>
        <topology evidence="2">Multi-pass membrane protein</topology>
    </subcellularLocation>
</comment>
<comment type="miscellaneous">
    <text evidence="1">Heme 1 (or BL or b562) is low-potential and absorbs at about 562 nm, and heme 2 (or BH or b566) is high-potential and absorbs at about 566 nm.</text>
</comment>
<comment type="similarity">
    <text evidence="3 4">Belongs to the cytochrome b family.</text>
</comment>
<comment type="caution">
    <text evidence="2">The full-length protein contains only eight transmembrane helices, not nine as predicted by bioinformatics tools.</text>
</comment>
<protein>
    <recommendedName>
        <fullName>Cytochrome b</fullName>
    </recommendedName>
    <alternativeName>
        <fullName>Complex III subunit 3</fullName>
    </alternativeName>
    <alternativeName>
        <fullName>Complex III subunit III</fullName>
    </alternativeName>
    <alternativeName>
        <fullName>Cytochrome b-c1 complex subunit 3</fullName>
    </alternativeName>
    <alternativeName>
        <fullName>Ubiquinol-cytochrome-c reductase complex cytochrome b subunit</fullName>
    </alternativeName>
</protein>
<keyword id="KW-0249">Electron transport</keyword>
<keyword id="KW-0349">Heme</keyword>
<keyword id="KW-0408">Iron</keyword>
<keyword id="KW-0472">Membrane</keyword>
<keyword id="KW-0479">Metal-binding</keyword>
<keyword id="KW-0496">Mitochondrion</keyword>
<keyword id="KW-0999">Mitochondrion inner membrane</keyword>
<keyword id="KW-1185">Reference proteome</keyword>
<keyword id="KW-0679">Respiratory chain</keyword>
<keyword id="KW-0812">Transmembrane</keyword>
<keyword id="KW-1133">Transmembrane helix</keyword>
<keyword id="KW-0813">Transport</keyword>
<keyword id="KW-0830">Ubiquinone</keyword>
<proteinExistence type="inferred from homology"/>
<feature type="chain" id="PRO_0000061187" description="Cytochrome b">
    <location>
        <begin position="1"/>
        <end position="379"/>
    </location>
</feature>
<feature type="transmembrane region" description="Helical" evidence="2">
    <location>
        <begin position="33"/>
        <end position="53"/>
    </location>
</feature>
<feature type="transmembrane region" description="Helical" evidence="2">
    <location>
        <begin position="77"/>
        <end position="98"/>
    </location>
</feature>
<feature type="transmembrane region" description="Helical" evidence="2">
    <location>
        <begin position="113"/>
        <end position="133"/>
    </location>
</feature>
<feature type="transmembrane region" description="Helical" evidence="2">
    <location>
        <begin position="178"/>
        <end position="198"/>
    </location>
</feature>
<feature type="transmembrane region" description="Helical" evidence="2">
    <location>
        <begin position="226"/>
        <end position="246"/>
    </location>
</feature>
<feature type="transmembrane region" description="Helical" evidence="2">
    <location>
        <begin position="288"/>
        <end position="308"/>
    </location>
</feature>
<feature type="transmembrane region" description="Helical" evidence="2">
    <location>
        <begin position="320"/>
        <end position="340"/>
    </location>
</feature>
<feature type="transmembrane region" description="Helical" evidence="2">
    <location>
        <begin position="347"/>
        <end position="367"/>
    </location>
</feature>
<feature type="binding site" description="axial binding residue" evidence="2">
    <location>
        <position position="83"/>
    </location>
    <ligand>
        <name>heme b</name>
        <dbReference type="ChEBI" id="CHEBI:60344"/>
        <label>b562</label>
    </ligand>
    <ligandPart>
        <name>Fe</name>
        <dbReference type="ChEBI" id="CHEBI:18248"/>
    </ligandPart>
</feature>
<feature type="binding site" description="axial binding residue" evidence="2">
    <location>
        <position position="97"/>
    </location>
    <ligand>
        <name>heme b</name>
        <dbReference type="ChEBI" id="CHEBI:60344"/>
        <label>b566</label>
    </ligand>
    <ligandPart>
        <name>Fe</name>
        <dbReference type="ChEBI" id="CHEBI:18248"/>
    </ligandPart>
</feature>
<feature type="binding site" description="axial binding residue" evidence="2">
    <location>
        <position position="182"/>
    </location>
    <ligand>
        <name>heme b</name>
        <dbReference type="ChEBI" id="CHEBI:60344"/>
        <label>b562</label>
    </ligand>
    <ligandPart>
        <name>Fe</name>
        <dbReference type="ChEBI" id="CHEBI:18248"/>
    </ligandPart>
</feature>
<feature type="binding site" description="axial binding residue" evidence="2">
    <location>
        <position position="196"/>
    </location>
    <ligand>
        <name>heme b</name>
        <dbReference type="ChEBI" id="CHEBI:60344"/>
        <label>b566</label>
    </ligand>
    <ligandPart>
        <name>Fe</name>
        <dbReference type="ChEBI" id="CHEBI:18248"/>
    </ligandPart>
</feature>
<feature type="binding site" evidence="2">
    <location>
        <position position="201"/>
    </location>
    <ligand>
        <name>a ubiquinone</name>
        <dbReference type="ChEBI" id="CHEBI:16389"/>
    </ligand>
</feature>
<feature type="sequence variant" description="In strain: Isolate RMR 24.">
    <original>T</original>
    <variation>A</variation>
    <location>
        <position position="2"/>
    </location>
</feature>
<feature type="sequence variant" description="In strain: Isolate Jorg 37.">
    <original>V</original>
    <variation>A</variation>
    <location>
        <position position="42"/>
    </location>
</feature>
<feature type="sequence variant" description="In strain: Isolate Jorg 64.">
    <original>I</original>
    <variation>V</variation>
    <location>
        <position position="78"/>
    </location>
</feature>
<feature type="sequence variant" description="In strain: Isolate YLE357.">
    <original>T</original>
    <variation>N</variation>
    <location>
        <position position="158"/>
    </location>
</feature>
<feature type="sequence variant" description="In strain: Isolate Jorg 33.">
    <original>F</original>
    <variation>Y</variation>
    <location>
        <position position="183"/>
    </location>
</feature>
<feature type="sequence variant" description="In strain: Isolate RMR 24.">
    <original>L</original>
    <variation>M</variation>
    <location>
        <position position="185"/>
    </location>
</feature>
<feature type="sequence variant" description="In strain: Isolate YLE74.">
    <original>P</original>
    <variation>T</variation>
    <location>
        <position position="186"/>
    </location>
</feature>
<feature type="sequence variant" description="In strain: Isolate RMR 44.">
    <original>V</original>
    <variation>I</variation>
    <location>
        <position position="195"/>
    </location>
</feature>
<feature type="sequence variant" description="In strain: Isolate Jorg 64.">
    <original>F</original>
    <variation>L</variation>
    <location>
        <position position="234"/>
    </location>
</feature>
<feature type="sequence variant" description="In strain: Isolate Jorg 64.">
    <original>G</original>
    <variation>D</variation>
    <location>
        <position position="251"/>
    </location>
</feature>
<feature type="sequence variant" description="In strain: Isolate Jorg 37.">
    <original>T</original>
    <variation>A</variation>
    <location>
        <position position="316"/>
    </location>
</feature>
<feature type="sequence variant" description="In strain: Isolate 00-016A-8EBC and Isolate RMR 24.">
    <original>M</original>
    <variation>I</variation>
    <location>
        <position position="324"/>
    </location>
</feature>
<feature type="sequence variant" description="In strain: Isolate YLE199.">
    <original>M</original>
    <variation>T</variation>
    <location>
        <position position="324"/>
    </location>
</feature>
<feature type="sequence variant" description="In strain: Isolate 00-016A-8EBC, Isolate RMR 24 and Isolate YLE199.">
    <original>H</original>
    <variation>Y</variation>
    <location>
        <position position="345"/>
    </location>
</feature>
<evidence type="ECO:0000250" key="1"/>
<evidence type="ECO:0000250" key="2">
    <source>
        <dbReference type="UniProtKB" id="P00157"/>
    </source>
</evidence>
<evidence type="ECO:0000255" key="3">
    <source>
        <dbReference type="PROSITE-ProRule" id="PRU00967"/>
    </source>
</evidence>
<evidence type="ECO:0000255" key="4">
    <source>
        <dbReference type="PROSITE-ProRule" id="PRU00968"/>
    </source>
</evidence>
<name>CYB_MICMU</name>
<reference key="1">
    <citation type="journal article" date="1996" name="Proc. Natl. Acad. Sci. U.S.A.">
        <title>Ancient single origin for Malagasy primates.</title>
        <authorList>
            <person name="Yoder A.D."/>
            <person name="Cartmill M."/>
            <person name="Ruvolo M."/>
            <person name="Smith K."/>
            <person name="Vilgalys R."/>
        </authorList>
    </citation>
    <scope>NUCLEOTIDE SEQUENCE [GENOMIC DNA]</scope>
</reference>
<reference key="2">
    <citation type="journal article" date="2000" name="Proc. Natl. Acad. Sci. U.S.A.">
        <title>Remarkable species diversity in Malagasy mouse lemurs (primates, Microcebus).</title>
        <authorList>
            <person name="Yoder A.D."/>
            <person name="Rasoloarison R.M."/>
            <person name="Goodman S.M."/>
            <person name="Irwin J.A."/>
            <person name="Atsalis S."/>
            <person name="Ravosa M.J."/>
            <person name="Ganzhorn J.U."/>
        </authorList>
    </citation>
    <scope>NUCLEOTIDE SEQUENCE [GENOMIC DNA]</scope>
    <source>
        <strain>Isolate 00-016A-8EBC</strain>
        <strain>Isolate Jorg 33</strain>
        <strain>Isolate Jorg 37</strain>
        <strain>Isolate Jorg 64</strain>
        <strain>Isolate RMR 24</strain>
        <strain>Isolate RMR 44</strain>
        <strain>Isolate YLE199</strain>
        <strain>Isolate YLE74</strain>
    </source>
</reference>
<reference key="3">
    <citation type="journal article" date="2002" name="Folia Primatol.">
        <title>Molecular evidence of reproductive isolation in sympatric sibling species of mouse lemurs.</title>
        <authorList>
            <person name="Yoder A.D."/>
            <person name="Burns M.M."/>
            <person name="Genin F."/>
        </authorList>
    </citation>
    <scope>NUCLEOTIDE SEQUENCE [GENOMIC DNA]</scope>
    <source>
        <strain>Isolate YLE357</strain>
    </source>
</reference>
<accession>Q9G0S9</accession>
<accession>Q35043</accession>
<accession>Q8HEG1</accession>
<accession>Q9G935</accession>
<accession>Q9G936</accession>
<accession>Q9G937</accession>
<accession>Q9G938</accession>
<accession>Q9G939</accession>
<accession>Q9G940</accession>
<accession>Q9G941</accession>